<reference key="1">
    <citation type="journal article" date="2008" name="J. Virol.">
        <title>Full genome-based classification of rotaviruses reveals a common origin between human Wa-Like and porcine rotavirus strains and human DS-1-like and bovine rotavirus strains.</title>
        <authorList>
            <person name="Matthijnssens J."/>
            <person name="Ciarlet M."/>
            <person name="Heiman E.M."/>
            <person name="Arijs I."/>
            <person name="Delbeke T."/>
            <person name="McDonald S.M."/>
            <person name="Palombo E.A."/>
            <person name="Iturriza-Gomara M."/>
            <person name="Maes P."/>
            <person name="Patton J.T."/>
            <person name="Rahman M."/>
            <person name="Van Ranst M."/>
        </authorList>
    </citation>
    <scope>NUCLEOTIDE SEQUENCE [GENOMIC RNA]</scope>
</reference>
<organism>
    <name type="scientific">Rotavirus A (isolate RVA/Human/United States/WI61/1983/G9P1A[8])</name>
    <name type="common">RV-A</name>
    <dbReference type="NCBI Taxonomy" id="578830"/>
    <lineage>
        <taxon>Viruses</taxon>
        <taxon>Riboviria</taxon>
        <taxon>Orthornavirae</taxon>
        <taxon>Duplornaviricota</taxon>
        <taxon>Resentoviricetes</taxon>
        <taxon>Reovirales</taxon>
        <taxon>Sedoreoviridae</taxon>
        <taxon>Rotavirus</taxon>
        <taxon>Rotavirus A</taxon>
    </lineage>
</organism>
<name>VP6_ROTWI</name>
<comment type="function">
    <text evidence="1">Intermediate capsid protein that self assembles to form an icosahedral capsid with a T=13 symmetry, which consists of 230 trimers of VP6, with channels at each of its five-fold vertices. This capsid constitutes the middle concentric layer of the viral mature particle. The innermost VP2 capsid and the intermediate VP6 capsid remain intact following cell entry to protect the dsRNA from degradation and to prevent unfavorable antiviral responses in the host cell during all the replication cycle of the virus. Nascent transcripts are transcribed within the structural confines of this double-layered particle (DLP) and are extruded through the channels at the five-fold axes. VP6 is required for the transcription activity of the DLP.</text>
</comment>
<comment type="subunit">
    <text evidence="1">Homotrimer. Interacts with the inner capsid protein VP2. Interacts with the outer capsid glycoprotein VP7. Interacts with the outer capsid protein VP5*.</text>
</comment>
<comment type="subcellular location">
    <subcellularLocation>
        <location evidence="1">Virion</location>
    </subcellularLocation>
    <text evidence="1">Component of the intermediate capsid. Also found in spherical cytoplasmic structures, called virus factories, that appear early after infection and are the site of viral replication and packaging.</text>
</comment>
<comment type="PTM">
    <text evidence="1">The N-terminus is blocked.</text>
</comment>
<comment type="PTM">
    <text evidence="1">Sumoylated with SUMO1 and SUMO2. Sumoylation of viral proteins seems to have a positive role on viral replication.</text>
</comment>
<comment type="miscellaneous">
    <text evidence="1">The VP6 trimer contains a zinc ion located at the center of the molecule. The zinc ion is not essential for either trimerization or transcription activity of the DLP. Zinc-depleted VP6 has an increased sensitivity to proteases.</text>
</comment>
<comment type="similarity">
    <text evidence="1">Belongs to the rotavirus VP6 family.</text>
</comment>
<organismHost>
    <name type="scientific">Homo sapiens</name>
    <name type="common">Human</name>
    <dbReference type="NCBI Taxonomy" id="9606"/>
</organismHost>
<protein>
    <recommendedName>
        <fullName evidence="1">Intermediate capsid protein VP6</fullName>
    </recommendedName>
</protein>
<feature type="chain" id="PRO_0000368167" description="Intermediate capsid protein VP6">
    <location>
        <begin position="1"/>
        <end position="397"/>
    </location>
</feature>
<feature type="region of interest" description="Interaction with the inner capsid protein VP2" evidence="1">
    <location>
        <begin position="62"/>
        <end position="73"/>
    </location>
</feature>
<feature type="binding site" evidence="1">
    <location>
        <position position="153"/>
    </location>
    <ligand>
        <name>Zn(2+)</name>
        <dbReference type="ChEBI" id="CHEBI:29105"/>
        <note>ligand shared between all trimeric partners</note>
    </ligand>
</feature>
<feature type="binding site" evidence="1">
    <location>
        <position position="266"/>
    </location>
    <ligand>
        <name>Ca(2+)</name>
        <dbReference type="ChEBI" id="CHEBI:29108"/>
    </ligand>
</feature>
<feature type="binding site" evidence="1">
    <location>
        <position position="286"/>
    </location>
    <ligand>
        <name>Ca(2+)</name>
        <dbReference type="ChEBI" id="CHEBI:29108"/>
    </ligand>
</feature>
<accession>B1NKU4</accession>
<keyword id="KW-0106">Calcium</keyword>
<keyword id="KW-0167">Capsid protein</keyword>
<keyword id="KW-1154">Intermediate capsid protein</keyword>
<keyword id="KW-0479">Metal-binding</keyword>
<keyword id="KW-0832">Ubl conjugation</keyword>
<keyword id="KW-0946">Virion</keyword>
<keyword id="KW-0862">Zinc</keyword>
<evidence type="ECO:0000255" key="1">
    <source>
        <dbReference type="HAMAP-Rule" id="MF_04129"/>
    </source>
</evidence>
<sequence length="397" mass="44983">MEVLYSLSKTLKDARDKIIEGTLYSNVSDLIQQFNQMIVTMNGNDFQTGGIGNLPIRNWTFDFGLLGTTLLNLDANYVETARTTIEYFIDFIDNVCMDEMARESQRNGVAPQSEALRKLAGIKFKRINFNNSSEYIENWNLQNRRQRTGFVFHKPNIFPYSASFTLNRSQPMHDNLMGTMWLNAGSEIQVAGFDYSCALNAPANIQQFEHIVQLRRALTTATITLLPDAERFSFPRVINSADGATTWFFNPIILRPNNVEVEFLLNGQIINTYQARFGTIIARNFDTIRLSFQLMRPPNMTPAVNALFPQAQPFQYHATVGLTLRIESAVCESVLADANETLLANVTAVRQEYAIPVGPVFPPGMNWTELITNYSPSREDNLQRVFTVASIRSMLIK</sequence>
<proteinExistence type="inferred from homology"/>
<dbReference type="EMBL" id="EF583052">
    <property type="protein sequence ID" value="ABU87861.1"/>
    <property type="molecule type" value="Genomic_RNA"/>
</dbReference>
<dbReference type="SMR" id="B1NKU4"/>
<dbReference type="Proteomes" id="UP000006580">
    <property type="component" value="Genome"/>
</dbReference>
<dbReference type="GO" id="GO:0019031">
    <property type="term" value="C:viral envelope"/>
    <property type="evidence" value="ECO:0007669"/>
    <property type="project" value="UniProtKB-UniRule"/>
</dbReference>
<dbReference type="GO" id="GO:0039626">
    <property type="term" value="C:viral intermediate capsid"/>
    <property type="evidence" value="ECO:0007669"/>
    <property type="project" value="UniProtKB-UniRule"/>
</dbReference>
<dbReference type="GO" id="GO:0046789">
    <property type="term" value="F:host cell surface receptor binding"/>
    <property type="evidence" value="ECO:0007669"/>
    <property type="project" value="UniProtKB-UniRule"/>
</dbReference>
<dbReference type="GO" id="GO:0046872">
    <property type="term" value="F:metal ion binding"/>
    <property type="evidence" value="ECO:0007669"/>
    <property type="project" value="UniProtKB-UniRule"/>
</dbReference>
<dbReference type="GO" id="GO:0005198">
    <property type="term" value="F:structural molecule activity"/>
    <property type="evidence" value="ECO:0007669"/>
    <property type="project" value="UniProtKB-UniRule"/>
</dbReference>
<dbReference type="GO" id="GO:0019064">
    <property type="term" value="P:fusion of virus membrane with host plasma membrane"/>
    <property type="evidence" value="ECO:0007669"/>
    <property type="project" value="UniProtKB-UniRule"/>
</dbReference>
<dbReference type="FunFam" id="2.60.120.170:FF:000001">
    <property type="entry name" value="Intermediate capsid protein VP6"/>
    <property type="match status" value="1"/>
</dbReference>
<dbReference type="Gene3D" id="2.60.120.170">
    <property type="match status" value="1"/>
</dbReference>
<dbReference type="Gene3D" id="1.10.1350.10">
    <property type="entry name" value="Viral capsid alpha domain"/>
    <property type="match status" value="1"/>
</dbReference>
<dbReference type="HAMAP" id="MF_04126">
    <property type="entry name" value="Rota_VP6"/>
    <property type="match status" value="1"/>
</dbReference>
<dbReference type="HAMAP" id="MF_04129">
    <property type="entry name" value="Rota_VP6_A"/>
    <property type="match status" value="1"/>
</dbReference>
<dbReference type="InterPro" id="IPR008980">
    <property type="entry name" value="Capsid_hemagglutn"/>
</dbReference>
<dbReference type="InterPro" id="IPR001385">
    <property type="entry name" value="Rotavirus_A/C_VP6"/>
</dbReference>
<dbReference type="InterPro" id="IPR008935">
    <property type="entry name" value="Virus_capsid_a-hlx_vir"/>
</dbReference>
<dbReference type="Pfam" id="PF00980">
    <property type="entry name" value="Rota_Capsid_VP6"/>
    <property type="match status" value="1"/>
</dbReference>
<dbReference type="SUPFAM" id="SSF48345">
    <property type="entry name" value="A virus capsid protein alpha-helical domain"/>
    <property type="match status" value="1"/>
</dbReference>
<dbReference type="SUPFAM" id="SSF49818">
    <property type="entry name" value="Viral protein domain"/>
    <property type="match status" value="1"/>
</dbReference>